<reference key="1">
    <citation type="submission" date="2007-02" db="EMBL/GenBank/DDBJ databases">
        <title>Complete sequence of chromosome of Shewanella baltica OS155.</title>
        <authorList>
            <consortium name="US DOE Joint Genome Institute"/>
            <person name="Copeland A."/>
            <person name="Lucas S."/>
            <person name="Lapidus A."/>
            <person name="Barry K."/>
            <person name="Detter J.C."/>
            <person name="Glavina del Rio T."/>
            <person name="Hammon N."/>
            <person name="Israni S."/>
            <person name="Dalin E."/>
            <person name="Tice H."/>
            <person name="Pitluck S."/>
            <person name="Sims D.R."/>
            <person name="Brettin T."/>
            <person name="Bruce D."/>
            <person name="Han C."/>
            <person name="Tapia R."/>
            <person name="Brainard J."/>
            <person name="Schmutz J."/>
            <person name="Larimer F."/>
            <person name="Land M."/>
            <person name="Hauser L."/>
            <person name="Kyrpides N."/>
            <person name="Mikhailova N."/>
            <person name="Brettar I."/>
            <person name="Klappenbach J."/>
            <person name="Konstantinidis K."/>
            <person name="Rodrigues J."/>
            <person name="Tiedje J."/>
            <person name="Richardson P."/>
        </authorList>
    </citation>
    <scope>NUCLEOTIDE SEQUENCE [LARGE SCALE GENOMIC DNA]</scope>
    <source>
        <strain>OS155 / ATCC BAA-1091</strain>
    </source>
</reference>
<proteinExistence type="inferred from homology"/>
<feature type="chain" id="PRO_1000014521" description="Transaldolase">
    <location>
        <begin position="1"/>
        <end position="318"/>
    </location>
</feature>
<feature type="active site" description="Schiff-base intermediate with substrate" evidence="2">
    <location>
        <position position="132"/>
    </location>
</feature>
<gene>
    <name evidence="2" type="primary">tal</name>
    <name type="ordered locus">Sbal_1044</name>
</gene>
<accession>A3D1F5</accession>
<dbReference type="EC" id="2.2.1.2" evidence="2"/>
<dbReference type="EMBL" id="CP000563">
    <property type="protein sequence ID" value="ABN60568.1"/>
    <property type="molecule type" value="Genomic_DNA"/>
</dbReference>
<dbReference type="RefSeq" id="WP_011846074.1">
    <property type="nucleotide sequence ID" value="NC_009052.1"/>
</dbReference>
<dbReference type="SMR" id="A3D1F5"/>
<dbReference type="STRING" id="325240.Sbal_1044"/>
<dbReference type="KEGG" id="sbl:Sbal_1044"/>
<dbReference type="HOGENOM" id="CLU_047470_0_1_6"/>
<dbReference type="OrthoDB" id="9809101at2"/>
<dbReference type="UniPathway" id="UPA00115">
    <property type="reaction ID" value="UER00414"/>
</dbReference>
<dbReference type="Proteomes" id="UP000001557">
    <property type="component" value="Chromosome"/>
</dbReference>
<dbReference type="GO" id="GO:0005829">
    <property type="term" value="C:cytosol"/>
    <property type="evidence" value="ECO:0007669"/>
    <property type="project" value="TreeGrafter"/>
</dbReference>
<dbReference type="GO" id="GO:0004801">
    <property type="term" value="F:transaldolase activity"/>
    <property type="evidence" value="ECO:0000250"/>
    <property type="project" value="UniProtKB"/>
</dbReference>
<dbReference type="GO" id="GO:0005975">
    <property type="term" value="P:carbohydrate metabolic process"/>
    <property type="evidence" value="ECO:0007669"/>
    <property type="project" value="InterPro"/>
</dbReference>
<dbReference type="GO" id="GO:0006098">
    <property type="term" value="P:pentose-phosphate shunt"/>
    <property type="evidence" value="ECO:0007669"/>
    <property type="project" value="UniProtKB-UniRule"/>
</dbReference>
<dbReference type="CDD" id="cd00957">
    <property type="entry name" value="Transaldolase_TalAB"/>
    <property type="match status" value="1"/>
</dbReference>
<dbReference type="FunFam" id="3.20.20.70:FF:000002">
    <property type="entry name" value="Transaldolase"/>
    <property type="match status" value="1"/>
</dbReference>
<dbReference type="Gene3D" id="3.20.20.70">
    <property type="entry name" value="Aldolase class I"/>
    <property type="match status" value="1"/>
</dbReference>
<dbReference type="HAMAP" id="MF_00492">
    <property type="entry name" value="Transaldolase_1"/>
    <property type="match status" value="1"/>
</dbReference>
<dbReference type="InterPro" id="IPR013785">
    <property type="entry name" value="Aldolase_TIM"/>
</dbReference>
<dbReference type="InterPro" id="IPR001585">
    <property type="entry name" value="TAL/FSA"/>
</dbReference>
<dbReference type="InterPro" id="IPR004730">
    <property type="entry name" value="Transaldolase_1"/>
</dbReference>
<dbReference type="InterPro" id="IPR018225">
    <property type="entry name" value="Transaldolase_AS"/>
</dbReference>
<dbReference type="NCBIfam" id="NF009001">
    <property type="entry name" value="PRK12346.1"/>
    <property type="match status" value="1"/>
</dbReference>
<dbReference type="NCBIfam" id="TIGR00874">
    <property type="entry name" value="talAB"/>
    <property type="match status" value="1"/>
</dbReference>
<dbReference type="PANTHER" id="PTHR10683">
    <property type="entry name" value="TRANSALDOLASE"/>
    <property type="match status" value="1"/>
</dbReference>
<dbReference type="PANTHER" id="PTHR10683:SF18">
    <property type="entry name" value="TRANSALDOLASE"/>
    <property type="match status" value="1"/>
</dbReference>
<dbReference type="Pfam" id="PF00923">
    <property type="entry name" value="TAL_FSA"/>
    <property type="match status" value="1"/>
</dbReference>
<dbReference type="SUPFAM" id="SSF51569">
    <property type="entry name" value="Aldolase"/>
    <property type="match status" value="1"/>
</dbReference>
<dbReference type="PROSITE" id="PS01054">
    <property type="entry name" value="TRANSALDOLASE_1"/>
    <property type="match status" value="1"/>
</dbReference>
<dbReference type="PROSITE" id="PS00958">
    <property type="entry name" value="TRANSALDOLASE_2"/>
    <property type="match status" value="1"/>
</dbReference>
<evidence type="ECO:0000250" key="1"/>
<evidence type="ECO:0000255" key="2">
    <source>
        <dbReference type="HAMAP-Rule" id="MF_00492"/>
    </source>
</evidence>
<name>TAL_SHEB5</name>
<comment type="function">
    <text evidence="2">Transaldolase is important for the balance of metabolites in the pentose-phosphate pathway.</text>
</comment>
<comment type="catalytic activity">
    <reaction evidence="2">
        <text>D-sedoheptulose 7-phosphate + D-glyceraldehyde 3-phosphate = D-erythrose 4-phosphate + beta-D-fructose 6-phosphate</text>
        <dbReference type="Rhea" id="RHEA:17053"/>
        <dbReference type="ChEBI" id="CHEBI:16897"/>
        <dbReference type="ChEBI" id="CHEBI:57483"/>
        <dbReference type="ChEBI" id="CHEBI:57634"/>
        <dbReference type="ChEBI" id="CHEBI:59776"/>
        <dbReference type="EC" id="2.2.1.2"/>
    </reaction>
</comment>
<comment type="pathway">
    <text evidence="2">Carbohydrate degradation; pentose phosphate pathway; D-glyceraldehyde 3-phosphate and beta-D-fructose 6-phosphate from D-ribose 5-phosphate and D-xylulose 5-phosphate (non-oxidative stage): step 2/3.</text>
</comment>
<comment type="subunit">
    <text evidence="1">Homodimer.</text>
</comment>
<comment type="subcellular location">
    <subcellularLocation>
        <location evidence="2">Cytoplasm</location>
    </subcellularLocation>
</comment>
<comment type="similarity">
    <text evidence="2">Belongs to the transaldolase family. Type 1 subfamily.</text>
</comment>
<sequence length="318" mass="34921">MANTLEQLKLYTTIVADTGDIEAIKRYQPEDATTNPSLILKAAQIPEYESLIDNAIDWAKSQSANLAQQLDDASDKLAVNIGVEILKLVPGRISTEVDARLSFDKEQSIAKAHKLVRLYQEAGVDKSRILIKLASTWEGICAARELEKEGINCNLTLLFSFAQARACAEAGAYLISPFVGRILDWYKKDTGKDYDAVNDPGVVSVTEIYNYYKQHGFNTVVMGASFRNIGEIIELAGCDRLTIGPSLLEELANSQIDITPKLVAATSTVAAEAPLTEAQFRWDFNQDPMAVDKLAEGIRNFAIDQGKLEVMLTAKLAN</sequence>
<organism>
    <name type="scientific">Shewanella baltica (strain OS155 / ATCC BAA-1091)</name>
    <dbReference type="NCBI Taxonomy" id="325240"/>
    <lineage>
        <taxon>Bacteria</taxon>
        <taxon>Pseudomonadati</taxon>
        <taxon>Pseudomonadota</taxon>
        <taxon>Gammaproteobacteria</taxon>
        <taxon>Alteromonadales</taxon>
        <taxon>Shewanellaceae</taxon>
        <taxon>Shewanella</taxon>
    </lineage>
</organism>
<protein>
    <recommendedName>
        <fullName evidence="2">Transaldolase</fullName>
        <ecNumber evidence="2">2.2.1.2</ecNumber>
    </recommendedName>
</protein>
<keyword id="KW-0963">Cytoplasm</keyword>
<keyword id="KW-0570">Pentose shunt</keyword>
<keyword id="KW-1185">Reference proteome</keyword>
<keyword id="KW-0704">Schiff base</keyword>
<keyword id="KW-0808">Transferase</keyword>